<sequence length="300" mass="34578">MATKRAHPEDETHESKRAAQETQLLPYNGSGFLMQVENDGALRKFTPINAMRAQQNLSWQCLVLLNCQALDFSAINFHYGDLQYLKDKFTELQNLSNYYEWRKQERPEDKVCIMEAAVGKCTYTIGLRVKGRPNGFAIAEFGSVHRSKSTFGQFLSTTWSAIHEHNSVFGKIMDSYYKHEYPLKLESSVCVHLPEKDYEREIKARQFLWVRRDNNPELYATGQLDRPLEVAPMTLAEFDRLFEVNKTDGPSQEVPVLVCGRIDGVKYGKEIQMTDVNGRKFSEKPYSLAFKPVLYLILEP</sequence>
<organism>
    <name type="scientific">Orgyia pseudotsugata multicapsid polyhedrosis virus</name>
    <name type="common">OpMNPV</name>
    <dbReference type="NCBI Taxonomy" id="262177"/>
    <lineage>
        <taxon>Viruses</taxon>
        <taxon>Viruses incertae sedis</taxon>
        <taxon>Naldaviricetes</taxon>
        <taxon>Lefavirales</taxon>
        <taxon>Baculoviridae</taxon>
        <taxon>Alphabaculovirus</taxon>
        <taxon>Alphabaculovirus orpseudotsugatae</taxon>
    </lineage>
</organism>
<dbReference type="EMBL" id="U75930">
    <property type="protein sequence ID" value="AAC59042.1"/>
    <property type="molecule type" value="Genomic_DNA"/>
</dbReference>
<dbReference type="RefSeq" id="NP_046199.1">
    <property type="nucleotide sequence ID" value="NC_001875.2"/>
</dbReference>
<dbReference type="KEGG" id="vg:912098"/>
<dbReference type="OrthoDB" id="23658at10239"/>
<dbReference type="Proteomes" id="UP000009248">
    <property type="component" value="Genome"/>
</dbReference>
<dbReference type="InterPro" id="IPR006871">
    <property type="entry name" value="ssDNA-bd_baculovirus"/>
</dbReference>
<dbReference type="Pfam" id="PF04786">
    <property type="entry name" value="Baculo_DNA_bind"/>
    <property type="match status" value="1"/>
</dbReference>
<organismHost>
    <name type="scientific">Orgyia pseudotsugata</name>
    <name type="common">Douglas-fir tussock moth</name>
    <dbReference type="NCBI Taxonomy" id="33414"/>
</organismHost>
<gene>
    <name type="ORF">ORF43</name>
</gene>
<evidence type="ECO:0000256" key="1">
    <source>
        <dbReference type="SAM" id="MobiDB-lite"/>
    </source>
</evidence>
<reference key="1">
    <citation type="journal article" date="1997" name="Virology">
        <title>The sequence of the Orgyia pseudotsugata multinucleocapsid nuclear polyhedrosis virus genome.</title>
        <authorList>
            <person name="Ahrens C.H."/>
            <person name="Russell R.R."/>
            <person name="Funk C.J."/>
            <person name="Evans J."/>
            <person name="Harwood S."/>
            <person name="Rohrmann G.F."/>
        </authorList>
    </citation>
    <scope>NUCLEOTIDE SEQUENCE [LARGE SCALE GENOMIC DNA]</scope>
</reference>
<name>Y025_NPVOP</name>
<accession>O10298</accession>
<proteinExistence type="predicted"/>
<protein>
    <recommendedName>
        <fullName>Uncharacterized 34.6 kDa protein</fullName>
    </recommendedName>
</protein>
<keyword id="KW-1185">Reference proteome</keyword>
<feature type="chain" id="PRO_0000132963" description="Uncharacterized 34.6 kDa protein">
    <location>
        <begin position="1"/>
        <end position="300"/>
    </location>
</feature>
<feature type="region of interest" description="Disordered" evidence="1">
    <location>
        <begin position="1"/>
        <end position="20"/>
    </location>
</feature>
<feature type="compositionally biased region" description="Basic and acidic residues" evidence="1">
    <location>
        <begin position="1"/>
        <end position="19"/>
    </location>
</feature>